<protein>
    <recommendedName>
        <fullName evidence="1">Small ribosomal subunit protein uS15</fullName>
    </recommendedName>
    <alternativeName>
        <fullName evidence="2">30S ribosomal protein S15</fullName>
    </alternativeName>
</protein>
<sequence length="89" mass="10269">MSLSTEATAKIVSEFGRDANDTGSTEVQVALLTAQINHLQGHFAEHKKDHHSRRGLLRMVSQRRKLLDYLKRKDVARYTQLIERLGLRR</sequence>
<proteinExistence type="inferred from homology"/>
<keyword id="KW-1185">Reference proteome</keyword>
<keyword id="KW-0687">Ribonucleoprotein</keyword>
<keyword id="KW-0689">Ribosomal protein</keyword>
<keyword id="KW-0694">RNA-binding</keyword>
<keyword id="KW-0699">rRNA-binding</keyword>
<reference key="1">
    <citation type="journal article" date="2009" name="PLoS Genet.">
        <title>Organised genome dynamics in the Escherichia coli species results in highly diverse adaptive paths.</title>
        <authorList>
            <person name="Touchon M."/>
            <person name="Hoede C."/>
            <person name="Tenaillon O."/>
            <person name="Barbe V."/>
            <person name="Baeriswyl S."/>
            <person name="Bidet P."/>
            <person name="Bingen E."/>
            <person name="Bonacorsi S."/>
            <person name="Bouchier C."/>
            <person name="Bouvet O."/>
            <person name="Calteau A."/>
            <person name="Chiapello H."/>
            <person name="Clermont O."/>
            <person name="Cruveiller S."/>
            <person name="Danchin A."/>
            <person name="Diard M."/>
            <person name="Dossat C."/>
            <person name="Karoui M.E."/>
            <person name="Frapy E."/>
            <person name="Garry L."/>
            <person name="Ghigo J.M."/>
            <person name="Gilles A.M."/>
            <person name="Johnson J."/>
            <person name="Le Bouguenec C."/>
            <person name="Lescat M."/>
            <person name="Mangenot S."/>
            <person name="Martinez-Jehanne V."/>
            <person name="Matic I."/>
            <person name="Nassif X."/>
            <person name="Oztas S."/>
            <person name="Petit M.A."/>
            <person name="Pichon C."/>
            <person name="Rouy Z."/>
            <person name="Ruf C.S."/>
            <person name="Schneider D."/>
            <person name="Tourret J."/>
            <person name="Vacherie B."/>
            <person name="Vallenet D."/>
            <person name="Medigue C."/>
            <person name="Rocha E.P.C."/>
            <person name="Denamur E."/>
        </authorList>
    </citation>
    <scope>NUCLEOTIDE SEQUENCE [LARGE SCALE GENOMIC DNA]</scope>
    <source>
        <strain>55989 / EAEC</strain>
    </source>
</reference>
<accession>B7LGI7</accession>
<evidence type="ECO:0000255" key="1">
    <source>
        <dbReference type="HAMAP-Rule" id="MF_01343"/>
    </source>
</evidence>
<evidence type="ECO:0000305" key="2"/>
<organism>
    <name type="scientific">Escherichia coli (strain 55989 / EAEC)</name>
    <dbReference type="NCBI Taxonomy" id="585055"/>
    <lineage>
        <taxon>Bacteria</taxon>
        <taxon>Pseudomonadati</taxon>
        <taxon>Pseudomonadota</taxon>
        <taxon>Gammaproteobacteria</taxon>
        <taxon>Enterobacterales</taxon>
        <taxon>Enterobacteriaceae</taxon>
        <taxon>Escherichia</taxon>
    </lineage>
</organism>
<gene>
    <name evidence="1" type="primary">rpsO</name>
    <name type="ordered locus">EC55989_3585</name>
</gene>
<comment type="function">
    <text evidence="1">One of the primary rRNA binding proteins, it binds directly to 16S rRNA where it helps nucleate assembly of the platform of the 30S subunit by binding and bridging several RNA helices of the 16S rRNA.</text>
</comment>
<comment type="function">
    <text evidence="1">Forms an intersubunit bridge (bridge B4) with the 23S rRNA of the 50S subunit in the ribosome.</text>
</comment>
<comment type="subunit">
    <text evidence="1">Part of the 30S ribosomal subunit. Forms a bridge to the 50S subunit in the 70S ribosome, contacting the 23S rRNA.</text>
</comment>
<comment type="similarity">
    <text evidence="1">Belongs to the universal ribosomal protein uS15 family.</text>
</comment>
<feature type="chain" id="PRO_1000166420" description="Small ribosomal subunit protein uS15">
    <location>
        <begin position="1"/>
        <end position="89"/>
    </location>
</feature>
<dbReference type="EMBL" id="CU928145">
    <property type="protein sequence ID" value="CAU99792.1"/>
    <property type="molecule type" value="Genomic_DNA"/>
</dbReference>
<dbReference type="RefSeq" id="WP_000059466.1">
    <property type="nucleotide sequence ID" value="NZ_CP028304.1"/>
</dbReference>
<dbReference type="SMR" id="B7LGI7"/>
<dbReference type="GeneID" id="93778818"/>
<dbReference type="KEGG" id="eck:EC55989_3585"/>
<dbReference type="HOGENOM" id="CLU_148518_0_0_6"/>
<dbReference type="Proteomes" id="UP000000746">
    <property type="component" value="Chromosome"/>
</dbReference>
<dbReference type="GO" id="GO:0022627">
    <property type="term" value="C:cytosolic small ribosomal subunit"/>
    <property type="evidence" value="ECO:0007669"/>
    <property type="project" value="TreeGrafter"/>
</dbReference>
<dbReference type="GO" id="GO:0019843">
    <property type="term" value="F:rRNA binding"/>
    <property type="evidence" value="ECO:0007669"/>
    <property type="project" value="UniProtKB-UniRule"/>
</dbReference>
<dbReference type="GO" id="GO:0003735">
    <property type="term" value="F:structural constituent of ribosome"/>
    <property type="evidence" value="ECO:0007669"/>
    <property type="project" value="InterPro"/>
</dbReference>
<dbReference type="GO" id="GO:0006412">
    <property type="term" value="P:translation"/>
    <property type="evidence" value="ECO:0007669"/>
    <property type="project" value="UniProtKB-UniRule"/>
</dbReference>
<dbReference type="CDD" id="cd00353">
    <property type="entry name" value="Ribosomal_S15p_S13e"/>
    <property type="match status" value="1"/>
</dbReference>
<dbReference type="FunFam" id="1.10.287.10:FF:000002">
    <property type="entry name" value="30S ribosomal protein S15"/>
    <property type="match status" value="1"/>
</dbReference>
<dbReference type="Gene3D" id="6.10.250.3130">
    <property type="match status" value="1"/>
</dbReference>
<dbReference type="Gene3D" id="1.10.287.10">
    <property type="entry name" value="S15/NS1, RNA-binding"/>
    <property type="match status" value="1"/>
</dbReference>
<dbReference type="HAMAP" id="MF_01343_B">
    <property type="entry name" value="Ribosomal_uS15_B"/>
    <property type="match status" value="1"/>
</dbReference>
<dbReference type="InterPro" id="IPR000589">
    <property type="entry name" value="Ribosomal_uS15"/>
</dbReference>
<dbReference type="InterPro" id="IPR005290">
    <property type="entry name" value="Ribosomal_uS15_bac-type"/>
</dbReference>
<dbReference type="InterPro" id="IPR009068">
    <property type="entry name" value="uS15_NS1_RNA-bd_sf"/>
</dbReference>
<dbReference type="NCBIfam" id="TIGR00952">
    <property type="entry name" value="S15_bact"/>
    <property type="match status" value="1"/>
</dbReference>
<dbReference type="PANTHER" id="PTHR23321">
    <property type="entry name" value="RIBOSOMAL PROTEIN S15, BACTERIAL AND ORGANELLAR"/>
    <property type="match status" value="1"/>
</dbReference>
<dbReference type="PANTHER" id="PTHR23321:SF26">
    <property type="entry name" value="SMALL RIBOSOMAL SUBUNIT PROTEIN US15M"/>
    <property type="match status" value="1"/>
</dbReference>
<dbReference type="Pfam" id="PF00312">
    <property type="entry name" value="Ribosomal_S15"/>
    <property type="match status" value="1"/>
</dbReference>
<dbReference type="SMART" id="SM01387">
    <property type="entry name" value="Ribosomal_S15"/>
    <property type="match status" value="1"/>
</dbReference>
<dbReference type="SUPFAM" id="SSF47060">
    <property type="entry name" value="S15/NS1 RNA-binding domain"/>
    <property type="match status" value="1"/>
</dbReference>
<dbReference type="PROSITE" id="PS00362">
    <property type="entry name" value="RIBOSOMAL_S15"/>
    <property type="match status" value="1"/>
</dbReference>
<name>RS15_ECO55</name>